<evidence type="ECO:0000255" key="1">
    <source>
        <dbReference type="HAMAP-Rule" id="MF_00113"/>
    </source>
</evidence>
<protein>
    <recommendedName>
        <fullName evidence="1">S-adenosylmethionine:tRNA ribosyltransferase-isomerase</fullName>
        <ecNumber evidence="1">2.4.99.17</ecNumber>
    </recommendedName>
    <alternativeName>
        <fullName evidence="1">Queuosine biosynthesis protein QueA</fullName>
    </alternativeName>
</protein>
<accession>Q5M0W1</accession>
<comment type="function">
    <text evidence="1">Transfers and isomerizes the ribose moiety from AdoMet to the 7-aminomethyl group of 7-deazaguanine (preQ1-tRNA) to give epoxyqueuosine (oQ-tRNA).</text>
</comment>
<comment type="catalytic activity">
    <reaction evidence="1">
        <text>7-aminomethyl-7-carbaguanosine(34) in tRNA + S-adenosyl-L-methionine = epoxyqueuosine(34) in tRNA + adenine + L-methionine + 2 H(+)</text>
        <dbReference type="Rhea" id="RHEA:32155"/>
        <dbReference type="Rhea" id="RHEA-COMP:10342"/>
        <dbReference type="Rhea" id="RHEA-COMP:18582"/>
        <dbReference type="ChEBI" id="CHEBI:15378"/>
        <dbReference type="ChEBI" id="CHEBI:16708"/>
        <dbReference type="ChEBI" id="CHEBI:57844"/>
        <dbReference type="ChEBI" id="CHEBI:59789"/>
        <dbReference type="ChEBI" id="CHEBI:82833"/>
        <dbReference type="ChEBI" id="CHEBI:194443"/>
        <dbReference type="EC" id="2.4.99.17"/>
    </reaction>
</comment>
<comment type="pathway">
    <text evidence="1">tRNA modification; tRNA-queuosine biosynthesis.</text>
</comment>
<comment type="subunit">
    <text evidence="1">Monomer.</text>
</comment>
<comment type="subcellular location">
    <subcellularLocation>
        <location evidence="1">Cytoplasm</location>
    </subcellularLocation>
</comment>
<comment type="similarity">
    <text evidence="1">Belongs to the QueA family.</text>
</comment>
<feature type="chain" id="PRO_0000231381" description="S-adenosylmethionine:tRNA ribosyltransferase-isomerase">
    <location>
        <begin position="1"/>
        <end position="347"/>
    </location>
</feature>
<reference key="1">
    <citation type="journal article" date="2004" name="Nat. Biotechnol.">
        <title>Complete sequence and comparative genome analysis of the dairy bacterium Streptococcus thermophilus.</title>
        <authorList>
            <person name="Bolotin A."/>
            <person name="Quinquis B."/>
            <person name="Renault P."/>
            <person name="Sorokin A."/>
            <person name="Ehrlich S.D."/>
            <person name="Kulakauskas S."/>
            <person name="Lapidus A."/>
            <person name="Goltsman E."/>
            <person name="Mazur M."/>
            <person name="Pusch G.D."/>
            <person name="Fonstein M."/>
            <person name="Overbeek R."/>
            <person name="Kyprides N."/>
            <person name="Purnelle B."/>
            <person name="Prozzi D."/>
            <person name="Ngui K."/>
            <person name="Masuy D."/>
            <person name="Hancy F."/>
            <person name="Burteau S."/>
            <person name="Boutry M."/>
            <person name="Delcour J."/>
            <person name="Goffeau A."/>
            <person name="Hols P."/>
        </authorList>
    </citation>
    <scope>NUCLEOTIDE SEQUENCE [LARGE SCALE GENOMIC DNA]</scope>
    <source>
        <strain>CNRZ 1066</strain>
    </source>
</reference>
<name>QUEA_STRT1</name>
<sequence length="347" mass="39019">MNTNDFDFELPEELIAQTPLKQRDASKLLVIDPVTREMTDTHFDHIIDQLNPRDALVMNNTRVLPARLYGEKTDTHGHVEFLLLKNTQGDQWEVLAKPAKRLKVGAKVSFGYGRLTATVTEELDHGGRIVEFSYDGIFLEVLESLGEMPLPPYIHEKLEDRDRYQTVYAKENGSAAAPTAGLHFTPELLQKIEAKGVKLVYLTLHVGLGTFRPVSVDNIDEHEMHSEFYTLSQEAADTLNSVKTAGGRIVAVGTTSIRTLETIGNKYDGQLQADSGWTNIFIKPGYQFTVVDAFSTNFHLPKSTLVMLVSAFAGREFVLEAYKHAVQERYRFFSFGDAMFVTRPSEK</sequence>
<gene>
    <name evidence="1" type="primary">queA</name>
    <name type="ordered locus">str0540</name>
</gene>
<keyword id="KW-0963">Cytoplasm</keyword>
<keyword id="KW-0671">Queuosine biosynthesis</keyword>
<keyword id="KW-0949">S-adenosyl-L-methionine</keyword>
<keyword id="KW-0808">Transferase</keyword>
<proteinExistence type="inferred from homology"/>
<dbReference type="EC" id="2.4.99.17" evidence="1"/>
<dbReference type="EMBL" id="CP000024">
    <property type="protein sequence ID" value="AAV62136.1"/>
    <property type="molecule type" value="Genomic_DNA"/>
</dbReference>
<dbReference type="RefSeq" id="WP_011226968.1">
    <property type="nucleotide sequence ID" value="NC_006449.1"/>
</dbReference>
<dbReference type="SMR" id="Q5M0W1"/>
<dbReference type="GeneID" id="66898441"/>
<dbReference type="KEGG" id="stc:str0540"/>
<dbReference type="HOGENOM" id="CLU_039110_1_0_9"/>
<dbReference type="UniPathway" id="UPA00392"/>
<dbReference type="GO" id="GO:0005737">
    <property type="term" value="C:cytoplasm"/>
    <property type="evidence" value="ECO:0007669"/>
    <property type="project" value="UniProtKB-SubCell"/>
</dbReference>
<dbReference type="GO" id="GO:0051075">
    <property type="term" value="F:S-adenosylmethionine:tRNA ribosyltransferase-isomerase activity"/>
    <property type="evidence" value="ECO:0007669"/>
    <property type="project" value="UniProtKB-EC"/>
</dbReference>
<dbReference type="GO" id="GO:0008616">
    <property type="term" value="P:queuosine biosynthetic process"/>
    <property type="evidence" value="ECO:0007669"/>
    <property type="project" value="UniProtKB-UniRule"/>
</dbReference>
<dbReference type="GO" id="GO:0002099">
    <property type="term" value="P:tRNA wobble guanine modification"/>
    <property type="evidence" value="ECO:0007669"/>
    <property type="project" value="TreeGrafter"/>
</dbReference>
<dbReference type="FunFam" id="2.40.10.240:FF:000002">
    <property type="entry name" value="S-adenosylmethionine:tRNA ribosyltransferase-isomerase"/>
    <property type="match status" value="1"/>
</dbReference>
<dbReference type="FunFam" id="3.40.1780.10:FF:000001">
    <property type="entry name" value="S-adenosylmethionine:tRNA ribosyltransferase-isomerase"/>
    <property type="match status" value="1"/>
</dbReference>
<dbReference type="Gene3D" id="2.40.10.240">
    <property type="entry name" value="QueA-like"/>
    <property type="match status" value="1"/>
</dbReference>
<dbReference type="Gene3D" id="3.40.1780.10">
    <property type="entry name" value="QueA-like"/>
    <property type="match status" value="1"/>
</dbReference>
<dbReference type="HAMAP" id="MF_00113">
    <property type="entry name" value="QueA"/>
    <property type="match status" value="1"/>
</dbReference>
<dbReference type="InterPro" id="IPR003699">
    <property type="entry name" value="QueA"/>
</dbReference>
<dbReference type="InterPro" id="IPR042118">
    <property type="entry name" value="QueA_dom1"/>
</dbReference>
<dbReference type="InterPro" id="IPR042119">
    <property type="entry name" value="QueA_dom2"/>
</dbReference>
<dbReference type="InterPro" id="IPR036100">
    <property type="entry name" value="QueA_sf"/>
</dbReference>
<dbReference type="NCBIfam" id="NF001140">
    <property type="entry name" value="PRK00147.1"/>
    <property type="match status" value="1"/>
</dbReference>
<dbReference type="NCBIfam" id="TIGR00113">
    <property type="entry name" value="queA"/>
    <property type="match status" value="1"/>
</dbReference>
<dbReference type="PANTHER" id="PTHR30307">
    <property type="entry name" value="S-ADENOSYLMETHIONINE:TRNA RIBOSYLTRANSFERASE-ISOMERASE"/>
    <property type="match status" value="1"/>
</dbReference>
<dbReference type="PANTHER" id="PTHR30307:SF0">
    <property type="entry name" value="S-ADENOSYLMETHIONINE:TRNA RIBOSYLTRANSFERASE-ISOMERASE"/>
    <property type="match status" value="1"/>
</dbReference>
<dbReference type="Pfam" id="PF02547">
    <property type="entry name" value="Queuosine_synth"/>
    <property type="match status" value="1"/>
</dbReference>
<dbReference type="SUPFAM" id="SSF111337">
    <property type="entry name" value="QueA-like"/>
    <property type="match status" value="1"/>
</dbReference>
<organism>
    <name type="scientific">Streptococcus thermophilus (strain CNRZ 1066)</name>
    <dbReference type="NCBI Taxonomy" id="299768"/>
    <lineage>
        <taxon>Bacteria</taxon>
        <taxon>Bacillati</taxon>
        <taxon>Bacillota</taxon>
        <taxon>Bacilli</taxon>
        <taxon>Lactobacillales</taxon>
        <taxon>Streptococcaceae</taxon>
        <taxon>Streptococcus</taxon>
    </lineage>
</organism>